<dbReference type="EMBL" id="D13986">
    <property type="protein sequence ID" value="BAA03093.1"/>
    <property type="molecule type" value="mRNA"/>
</dbReference>
<dbReference type="PIR" id="A44692">
    <property type="entry name" value="A44692"/>
</dbReference>
<dbReference type="SMR" id="P35905"/>
<dbReference type="GO" id="GO:0005179">
    <property type="term" value="F:hormone activity"/>
    <property type="evidence" value="ECO:0007669"/>
    <property type="project" value="UniProtKB-KW"/>
</dbReference>
<comment type="function">
    <text>Potentiates tetanic contraction of the penis retractor muscle at very low concentrations, and also shows modulatory actions on the activity of the buccal and ventricular muscles and the central ganglionic neurons.</text>
</comment>
<comment type="tissue specificity">
    <text>Found in central ganglia and the ventricles and atria of the heart.</text>
</comment>
<sequence length="357" mass="40702">MQPTVLLILMTSCLTYQVIADKPKGNHLHSRPERSPIVLFSDAPHAAASPADENDNFPVLKTANQYEDNNSATFSHLEEKHDFAEKQSTGDDEESVILNRVTGEVLSDTVDGSQGHLEPKRFNEFVGKRNTLPEEAGSFDADSQPGSLDTVRILAGLSNFGQPQIIDQGNMKNHRTLKNMIHNLYNTMNEDEASKRQYEFVGKRSYDFVGKRTYDFLGKRSPYYFLGKRYDFIGKRSPYDFIGKKNYDFVGKRSPYDFVGKRNQGVFTVSPSSTKISFDDNYLPYLSSVDAGDLSDVNKRYAEFLGKRKRTAEQDETSQRSNERLVALLQNTGFRKRLSRMLQNQRLVEHYPEFIGK</sequence>
<name>FULI_LISFU</name>
<evidence type="ECO:0000255" key="1"/>
<evidence type="ECO:0000269" key="2">
    <source>
    </source>
</evidence>
<protein>
    <recommendedName>
        <fullName>Fulicin peptides</fullName>
    </recommendedName>
    <component>
        <recommendedName>
            <fullName>Fulicin</fullName>
        </recommendedName>
    </component>
    <component>
        <recommendedName>
            <fullName>Fucilin gene-related peptide 1</fullName>
            <shortName>FGRP-1</shortName>
        </recommendedName>
    </component>
    <component>
        <recommendedName>
            <fullName>Fucilin gene-related peptide 2</fullName>
            <shortName>FGRP-2</shortName>
        </recommendedName>
    </component>
    <component>
        <recommendedName>
            <fullName>Fucilin gene-related peptide 3</fullName>
            <shortName>FGRP-3</shortName>
        </recommendedName>
    </component>
    <component>
        <recommendedName>
            <fullName>Fucilin gene-related peptide 4</fullName>
            <shortName>FGRP-4</shortName>
        </recommendedName>
    </component>
    <component>
        <recommendedName>
            <fullName>Fucilin gene-related peptide 5</fullName>
            <shortName>FGRP-5</shortName>
        </recommendedName>
    </component>
    <component>
        <recommendedName>
            <fullName>Fucilin gene-related peptide 6</fullName>
            <shortName>FGRP-6</shortName>
        </recommendedName>
    </component>
    <component>
        <recommendedName>
            <fullName>Fucilin gene-related peptide 7</fullName>
            <shortName>FGRP-7</shortName>
        </recommendedName>
    </component>
    <component>
        <recommendedName>
            <fullName>Fucilin gene-related peptide 8</fullName>
            <shortName>FGRP-8</shortName>
        </recommendedName>
    </component>
    <component>
        <recommendedName>
            <fullName>Fucilin gene-related peptide 9</fullName>
            <shortName>FGRP-9</shortName>
        </recommendedName>
    </component>
</protein>
<proteinExistence type="evidence at protein level"/>
<keyword id="KW-0027">Amidation</keyword>
<keyword id="KW-0165">Cleavage on pair of basic residues</keyword>
<keyword id="KW-0208">D-amino acid</keyword>
<keyword id="KW-0903">Direct protein sequencing</keyword>
<keyword id="KW-0372">Hormone</keyword>
<keyword id="KW-0732">Signal</keyword>
<feature type="signal peptide" evidence="1">
    <location>
        <begin position="1"/>
        <end position="17"/>
    </location>
</feature>
<feature type="propeptide" id="PRO_0000021291">
    <location>
        <begin position="18"/>
        <end position="119"/>
    </location>
</feature>
<feature type="peptide" id="PRO_0000021292" description="Fulicin">
    <location>
        <begin position="122"/>
        <end position="126"/>
    </location>
</feature>
<feature type="propeptide" id="PRO_0000021293">
    <location>
        <begin position="130"/>
        <end position="194"/>
    </location>
</feature>
<feature type="peptide" id="PRO_0000021294" description="Fucilin gene-related peptide 1">
    <location>
        <begin position="197"/>
        <end position="201"/>
    </location>
</feature>
<feature type="peptide" id="PRO_0000021295" description="Fucilin gene-related peptide 2">
    <location>
        <begin position="205"/>
        <end position="209"/>
    </location>
</feature>
<feature type="peptide" id="PRO_0000021296" description="Fucilin gene-related peptide 3">
    <location>
        <begin position="213"/>
        <end position="217"/>
    </location>
</feature>
<feature type="peptide" id="PRO_0000021297" description="Fucilin gene-related peptide 4">
    <location>
        <begin position="221"/>
        <end position="226"/>
    </location>
</feature>
<feature type="peptide" id="PRO_0000021298" description="Fucilin gene-related peptide 5">
    <location>
        <begin position="230"/>
        <end position="233"/>
    </location>
</feature>
<feature type="peptide" id="PRO_0000021299" description="Fucilin gene-related peptide 6">
    <location>
        <begin position="237"/>
        <end position="242"/>
    </location>
</feature>
<feature type="peptide" id="PRO_0000021300" description="Fucilin gene-related peptide 7">
    <location>
        <begin position="246"/>
        <end position="250"/>
    </location>
</feature>
<feature type="peptide" id="PRO_0000021301" description="Fucilin gene-related peptide 8">
    <location>
        <begin position="254"/>
        <end position="259"/>
    </location>
</feature>
<feature type="propeptide" id="PRO_0000021302">
    <location>
        <begin position="263"/>
        <end position="298"/>
    </location>
</feature>
<feature type="peptide" id="PRO_0000021303" description="Fucilin gene-related peptide 9">
    <location>
        <begin position="301"/>
        <end position="305"/>
    </location>
</feature>
<feature type="propeptide" id="PRO_0000021304">
    <location>
        <begin position="311"/>
        <end position="357"/>
    </location>
</feature>
<feature type="modified residue" description="D-asparagine" evidence="2">
    <location>
        <position position="123"/>
    </location>
</feature>
<feature type="modified residue" description="Valine amide" evidence="2">
    <location>
        <position position="126"/>
    </location>
</feature>
<feature type="modified residue" description="Valine amide" evidence="1">
    <location>
        <position position="201"/>
    </location>
</feature>
<feature type="modified residue" description="Valine amide" evidence="1">
    <location>
        <position position="209"/>
    </location>
</feature>
<feature type="modified residue" description="Leucine amide" evidence="1">
    <location>
        <position position="217"/>
    </location>
</feature>
<feature type="modified residue" description="Leucine amide" evidence="1">
    <location>
        <position position="226"/>
    </location>
</feature>
<feature type="modified residue" description="Isoleucine amide" evidence="1">
    <location>
        <position position="233"/>
    </location>
</feature>
<feature type="modified residue" description="Isoleucine amide" evidence="1">
    <location>
        <position position="242"/>
    </location>
</feature>
<feature type="modified residue" description="Valine amide" evidence="1">
    <location>
        <position position="250"/>
    </location>
</feature>
<feature type="modified residue" description="Valine amide" evidence="1">
    <location>
        <position position="259"/>
    </location>
</feature>
<feature type="modified residue" description="Leucine amide" evidence="1">
    <location>
        <position position="305"/>
    </location>
</feature>
<accession>P35905</accession>
<organism>
    <name type="scientific">Lissachatina fulica</name>
    <name type="common">Giant African land snail</name>
    <name type="synonym">Achatina fulica</name>
    <dbReference type="NCBI Taxonomy" id="2315439"/>
    <lineage>
        <taxon>Eukaryota</taxon>
        <taxon>Metazoa</taxon>
        <taxon>Spiralia</taxon>
        <taxon>Lophotrochozoa</taxon>
        <taxon>Mollusca</taxon>
        <taxon>Gastropoda</taxon>
        <taxon>Heterobranchia</taxon>
        <taxon>Euthyneura</taxon>
        <taxon>Panpulmonata</taxon>
        <taxon>Eupulmonata</taxon>
        <taxon>Stylommatophora</taxon>
        <taxon>Helicina</taxon>
        <taxon>Achatinoidea</taxon>
        <taxon>Achatinidae</taxon>
        <taxon>Lissachatina</taxon>
    </lineage>
</organism>
<reference key="1">
    <citation type="journal article" date="1995" name="J. Neurochem.">
        <title>A novel cDNA sequence encoding the precursor of the D-amino acid-containing neuropeptide fulicin and multiple alpha-amidated neuropeptides from Achatina fulica.</title>
        <authorList>
            <person name="Yasuda-Kamatani Y."/>
            <person name="Nakamura M."/>
            <person name="Minakata H."/>
            <person name="Nomoto K."/>
            <person name="Sakiyama F."/>
        </authorList>
    </citation>
    <scope>NUCLEOTIDE SEQUENCE [MRNA]</scope>
    <source>
        <tissue>Ganglion</tissue>
    </source>
</reference>
<reference key="2">
    <citation type="journal article" date="1991" name="Biochem. Biophys. Res. Commun.">
        <title>Fulicin, a novel neuropeptide containing a D-amino acid residue isolated from the ganglia of Achatina fulica.</title>
        <authorList>
            <person name="Ohta N."/>
            <person name="Kubota I."/>
            <person name="Takao T."/>
            <person name="Shimonishi Y."/>
            <person name="Yasuda-Kamatani Y."/>
            <person name="Minakata H."/>
            <person name="Nomoto K."/>
            <person name="Muneoka Y."/>
            <person name="Kobayashi M."/>
        </authorList>
    </citation>
    <scope>PROTEIN SEQUENCE OF 122-126</scope>
    <scope>D-AMINO ACID AT ASN-123</scope>
    <scope>AMIDATION AT VAL-126</scope>
    <source>
        <strain>Ferussac</strain>
        <tissue>Ganglion</tissue>
    </source>
</reference>